<dbReference type="EC" id="2.7.4.9" evidence="1"/>
<dbReference type="EMBL" id="CU928162">
    <property type="protein sequence ID" value="CAR07442.1"/>
    <property type="molecule type" value="Genomic_DNA"/>
</dbReference>
<dbReference type="RefSeq" id="WP_001257006.1">
    <property type="nucleotide sequence ID" value="NC_011745.1"/>
</dbReference>
<dbReference type="SMR" id="B7MTM8"/>
<dbReference type="KEGG" id="ecq:ECED1_1241"/>
<dbReference type="HOGENOM" id="CLU_049131_0_1_6"/>
<dbReference type="Proteomes" id="UP000000748">
    <property type="component" value="Chromosome"/>
</dbReference>
<dbReference type="GO" id="GO:0005829">
    <property type="term" value="C:cytosol"/>
    <property type="evidence" value="ECO:0007669"/>
    <property type="project" value="TreeGrafter"/>
</dbReference>
<dbReference type="GO" id="GO:0005524">
    <property type="term" value="F:ATP binding"/>
    <property type="evidence" value="ECO:0007669"/>
    <property type="project" value="UniProtKB-UniRule"/>
</dbReference>
<dbReference type="GO" id="GO:0004798">
    <property type="term" value="F:dTMP kinase activity"/>
    <property type="evidence" value="ECO:0007669"/>
    <property type="project" value="UniProtKB-UniRule"/>
</dbReference>
<dbReference type="GO" id="GO:0006233">
    <property type="term" value="P:dTDP biosynthetic process"/>
    <property type="evidence" value="ECO:0007669"/>
    <property type="project" value="InterPro"/>
</dbReference>
<dbReference type="GO" id="GO:0006235">
    <property type="term" value="P:dTTP biosynthetic process"/>
    <property type="evidence" value="ECO:0007669"/>
    <property type="project" value="UniProtKB-UniRule"/>
</dbReference>
<dbReference type="GO" id="GO:0006227">
    <property type="term" value="P:dUDP biosynthetic process"/>
    <property type="evidence" value="ECO:0007669"/>
    <property type="project" value="TreeGrafter"/>
</dbReference>
<dbReference type="CDD" id="cd01672">
    <property type="entry name" value="TMPK"/>
    <property type="match status" value="1"/>
</dbReference>
<dbReference type="FunFam" id="3.40.50.300:FF:000321">
    <property type="entry name" value="Thymidylate kinase"/>
    <property type="match status" value="1"/>
</dbReference>
<dbReference type="Gene3D" id="3.40.50.300">
    <property type="entry name" value="P-loop containing nucleotide triphosphate hydrolases"/>
    <property type="match status" value="1"/>
</dbReference>
<dbReference type="HAMAP" id="MF_00165">
    <property type="entry name" value="Thymidylate_kinase"/>
    <property type="match status" value="1"/>
</dbReference>
<dbReference type="InterPro" id="IPR027417">
    <property type="entry name" value="P-loop_NTPase"/>
</dbReference>
<dbReference type="InterPro" id="IPR039430">
    <property type="entry name" value="Thymidylate_kin-like_dom"/>
</dbReference>
<dbReference type="InterPro" id="IPR018095">
    <property type="entry name" value="Thymidylate_kin_CS"/>
</dbReference>
<dbReference type="InterPro" id="IPR018094">
    <property type="entry name" value="Thymidylate_kinase"/>
</dbReference>
<dbReference type="NCBIfam" id="TIGR00041">
    <property type="entry name" value="DTMP_kinase"/>
    <property type="match status" value="1"/>
</dbReference>
<dbReference type="PANTHER" id="PTHR10344">
    <property type="entry name" value="THYMIDYLATE KINASE"/>
    <property type="match status" value="1"/>
</dbReference>
<dbReference type="PANTHER" id="PTHR10344:SF4">
    <property type="entry name" value="UMP-CMP KINASE 2, MITOCHONDRIAL"/>
    <property type="match status" value="1"/>
</dbReference>
<dbReference type="Pfam" id="PF02223">
    <property type="entry name" value="Thymidylate_kin"/>
    <property type="match status" value="1"/>
</dbReference>
<dbReference type="SUPFAM" id="SSF52540">
    <property type="entry name" value="P-loop containing nucleoside triphosphate hydrolases"/>
    <property type="match status" value="1"/>
</dbReference>
<dbReference type="PROSITE" id="PS01331">
    <property type="entry name" value="THYMIDYLATE_KINASE"/>
    <property type="match status" value="1"/>
</dbReference>
<organism>
    <name type="scientific">Escherichia coli O81 (strain ED1a)</name>
    <dbReference type="NCBI Taxonomy" id="585397"/>
    <lineage>
        <taxon>Bacteria</taxon>
        <taxon>Pseudomonadati</taxon>
        <taxon>Pseudomonadota</taxon>
        <taxon>Gammaproteobacteria</taxon>
        <taxon>Enterobacterales</taxon>
        <taxon>Enterobacteriaceae</taxon>
        <taxon>Escherichia</taxon>
    </lineage>
</organism>
<gene>
    <name evidence="1" type="primary">tmk</name>
    <name type="ordered locus">ECED1_1241</name>
</gene>
<comment type="function">
    <text evidence="1">Phosphorylation of dTMP to form dTDP in both de novo and salvage pathways of dTTP synthesis.</text>
</comment>
<comment type="catalytic activity">
    <reaction evidence="1">
        <text>dTMP + ATP = dTDP + ADP</text>
        <dbReference type="Rhea" id="RHEA:13517"/>
        <dbReference type="ChEBI" id="CHEBI:30616"/>
        <dbReference type="ChEBI" id="CHEBI:58369"/>
        <dbReference type="ChEBI" id="CHEBI:63528"/>
        <dbReference type="ChEBI" id="CHEBI:456216"/>
        <dbReference type="EC" id="2.7.4.9"/>
    </reaction>
</comment>
<comment type="similarity">
    <text evidence="1">Belongs to the thymidylate kinase family.</text>
</comment>
<protein>
    <recommendedName>
        <fullName evidence="1">Thymidylate kinase</fullName>
        <ecNumber evidence="1">2.7.4.9</ecNumber>
    </recommendedName>
    <alternativeName>
        <fullName evidence="1">dTMP kinase</fullName>
    </alternativeName>
</protein>
<reference key="1">
    <citation type="journal article" date="2009" name="PLoS Genet.">
        <title>Organised genome dynamics in the Escherichia coli species results in highly diverse adaptive paths.</title>
        <authorList>
            <person name="Touchon M."/>
            <person name="Hoede C."/>
            <person name="Tenaillon O."/>
            <person name="Barbe V."/>
            <person name="Baeriswyl S."/>
            <person name="Bidet P."/>
            <person name="Bingen E."/>
            <person name="Bonacorsi S."/>
            <person name="Bouchier C."/>
            <person name="Bouvet O."/>
            <person name="Calteau A."/>
            <person name="Chiapello H."/>
            <person name="Clermont O."/>
            <person name="Cruveiller S."/>
            <person name="Danchin A."/>
            <person name="Diard M."/>
            <person name="Dossat C."/>
            <person name="Karoui M.E."/>
            <person name="Frapy E."/>
            <person name="Garry L."/>
            <person name="Ghigo J.M."/>
            <person name="Gilles A.M."/>
            <person name="Johnson J."/>
            <person name="Le Bouguenec C."/>
            <person name="Lescat M."/>
            <person name="Mangenot S."/>
            <person name="Martinez-Jehanne V."/>
            <person name="Matic I."/>
            <person name="Nassif X."/>
            <person name="Oztas S."/>
            <person name="Petit M.A."/>
            <person name="Pichon C."/>
            <person name="Rouy Z."/>
            <person name="Ruf C.S."/>
            <person name="Schneider D."/>
            <person name="Tourret J."/>
            <person name="Vacherie B."/>
            <person name="Vallenet D."/>
            <person name="Medigue C."/>
            <person name="Rocha E.P.C."/>
            <person name="Denamur E."/>
        </authorList>
    </citation>
    <scope>NUCLEOTIDE SEQUENCE [LARGE SCALE GENOMIC DNA]</scope>
    <source>
        <strain>ED1a</strain>
    </source>
</reference>
<keyword id="KW-0067">ATP-binding</keyword>
<keyword id="KW-0418">Kinase</keyword>
<keyword id="KW-0545">Nucleotide biosynthesis</keyword>
<keyword id="KW-0547">Nucleotide-binding</keyword>
<keyword id="KW-0808">Transferase</keyword>
<name>KTHY_ECO81</name>
<sequence length="213" mass="23702">MRSKYIVIEGLEGAGKTTARNVVVETLEQLGIRDMVFTREPGGTQLAEKLRSLVLDIKSVGDEVITDKAEVLMFYAARVQLVETVIKPALANGTWVIGDRHDLSTQAYQGGGRGIDQHMLATLRDAVLGDFRPDLTLYLDVTPEVGLKRARARGELDRIEQESFDFFNRTRARYLELAAQDKSIHTIDATQPLEAVMGAIRTTVTNWVKELDA</sequence>
<feature type="chain" id="PRO_1000123572" description="Thymidylate kinase">
    <location>
        <begin position="1"/>
        <end position="213"/>
    </location>
</feature>
<feature type="binding site" evidence="1">
    <location>
        <begin position="10"/>
        <end position="17"/>
    </location>
    <ligand>
        <name>ATP</name>
        <dbReference type="ChEBI" id="CHEBI:30616"/>
    </ligand>
</feature>
<proteinExistence type="inferred from homology"/>
<accession>B7MTM8</accession>
<evidence type="ECO:0000255" key="1">
    <source>
        <dbReference type="HAMAP-Rule" id="MF_00165"/>
    </source>
</evidence>